<feature type="chain" id="PRO_1000065962" description="Orotidine 5'-phosphate decarboxylase">
    <location>
        <begin position="1"/>
        <end position="245"/>
    </location>
</feature>
<feature type="active site" description="Proton donor" evidence="1">
    <location>
        <position position="73"/>
    </location>
</feature>
<feature type="binding site" evidence="1">
    <location>
        <position position="22"/>
    </location>
    <ligand>
        <name>substrate</name>
    </ligand>
</feature>
<feature type="binding site" evidence="1">
    <location>
        <position position="44"/>
    </location>
    <ligand>
        <name>substrate</name>
    </ligand>
</feature>
<feature type="binding site" evidence="1">
    <location>
        <begin position="71"/>
        <end position="80"/>
    </location>
    <ligand>
        <name>substrate</name>
    </ligand>
</feature>
<feature type="binding site" evidence="1">
    <location>
        <position position="131"/>
    </location>
    <ligand>
        <name>substrate</name>
    </ligand>
</feature>
<feature type="binding site" evidence="1">
    <location>
        <position position="192"/>
    </location>
    <ligand>
        <name>substrate</name>
    </ligand>
</feature>
<feature type="binding site" evidence="1">
    <location>
        <position position="201"/>
    </location>
    <ligand>
        <name>substrate</name>
    </ligand>
</feature>
<feature type="binding site" evidence="1">
    <location>
        <position position="221"/>
    </location>
    <ligand>
        <name>substrate</name>
    </ligand>
</feature>
<feature type="binding site" evidence="1">
    <location>
        <position position="222"/>
    </location>
    <ligand>
        <name>substrate</name>
    </ligand>
</feature>
<proteinExistence type="inferred from homology"/>
<protein>
    <recommendedName>
        <fullName evidence="1">Orotidine 5'-phosphate decarboxylase</fullName>
        <ecNumber evidence="1">4.1.1.23</ecNumber>
    </recommendedName>
    <alternativeName>
        <fullName evidence="1">OMP decarboxylase</fullName>
        <shortName evidence="1">OMPDCase</shortName>
        <shortName evidence="1">OMPdecase</shortName>
    </alternativeName>
</protein>
<sequence length="245" mass="26207">MTSATKTNNSGSISSPIVVALDYANKDAALAFADQVSPQDCRLKVGKEMFTLYGPELIRDLHQRGFDVFLDLKFHDIPNTTARAVAAAAELGVWMVNVHASGGARMMSAAKEALLPYGAQAPLLIAVTVLTSMDGEDLRDIGITISPAEQAERLAKLTWDCGLDGVVCSAHEAVRLKQVCGEDFSLVTPGIRPQGSEAGDQRRIMTPEQAVAVGVDYMVIGRPITQSPDPEKTLREILASLTKVA</sequence>
<name>PYRF_YERPA</name>
<dbReference type="EC" id="4.1.1.23" evidence="1"/>
<dbReference type="EMBL" id="CP000308">
    <property type="protein sequence ID" value="ABG13553.1"/>
    <property type="molecule type" value="Genomic_DNA"/>
</dbReference>
<dbReference type="RefSeq" id="WP_002210613.1">
    <property type="nucleotide sequence ID" value="NZ_CP009906.1"/>
</dbReference>
<dbReference type="SMR" id="Q1C7L9"/>
<dbReference type="GeneID" id="57976441"/>
<dbReference type="KEGG" id="ypa:YPA_1587"/>
<dbReference type="UniPathway" id="UPA00070">
    <property type="reaction ID" value="UER00120"/>
</dbReference>
<dbReference type="Proteomes" id="UP000001971">
    <property type="component" value="Chromosome"/>
</dbReference>
<dbReference type="GO" id="GO:0005829">
    <property type="term" value="C:cytosol"/>
    <property type="evidence" value="ECO:0007669"/>
    <property type="project" value="TreeGrafter"/>
</dbReference>
<dbReference type="GO" id="GO:0004590">
    <property type="term" value="F:orotidine-5'-phosphate decarboxylase activity"/>
    <property type="evidence" value="ECO:0007669"/>
    <property type="project" value="UniProtKB-UniRule"/>
</dbReference>
<dbReference type="GO" id="GO:0006207">
    <property type="term" value="P:'de novo' pyrimidine nucleobase biosynthetic process"/>
    <property type="evidence" value="ECO:0007669"/>
    <property type="project" value="InterPro"/>
</dbReference>
<dbReference type="GO" id="GO:0044205">
    <property type="term" value="P:'de novo' UMP biosynthetic process"/>
    <property type="evidence" value="ECO:0007669"/>
    <property type="project" value="UniProtKB-UniRule"/>
</dbReference>
<dbReference type="CDD" id="cd04725">
    <property type="entry name" value="OMP_decarboxylase_like"/>
    <property type="match status" value="1"/>
</dbReference>
<dbReference type="FunFam" id="3.20.20.70:FF:000015">
    <property type="entry name" value="Orotidine 5'-phosphate decarboxylase"/>
    <property type="match status" value="1"/>
</dbReference>
<dbReference type="Gene3D" id="3.20.20.70">
    <property type="entry name" value="Aldolase class I"/>
    <property type="match status" value="1"/>
</dbReference>
<dbReference type="HAMAP" id="MF_01200_B">
    <property type="entry name" value="OMPdecase_type1_B"/>
    <property type="match status" value="1"/>
</dbReference>
<dbReference type="InterPro" id="IPR013785">
    <property type="entry name" value="Aldolase_TIM"/>
</dbReference>
<dbReference type="InterPro" id="IPR014732">
    <property type="entry name" value="OMPdecase"/>
</dbReference>
<dbReference type="InterPro" id="IPR018089">
    <property type="entry name" value="OMPdecase_AS"/>
</dbReference>
<dbReference type="InterPro" id="IPR047596">
    <property type="entry name" value="OMPdecase_bac"/>
</dbReference>
<dbReference type="InterPro" id="IPR001754">
    <property type="entry name" value="OMPdeCOase_dom"/>
</dbReference>
<dbReference type="InterPro" id="IPR011060">
    <property type="entry name" value="RibuloseP-bd_barrel"/>
</dbReference>
<dbReference type="NCBIfam" id="NF001273">
    <property type="entry name" value="PRK00230.1"/>
    <property type="match status" value="1"/>
</dbReference>
<dbReference type="NCBIfam" id="TIGR01740">
    <property type="entry name" value="pyrF"/>
    <property type="match status" value="1"/>
</dbReference>
<dbReference type="PANTHER" id="PTHR32119">
    <property type="entry name" value="OROTIDINE 5'-PHOSPHATE DECARBOXYLASE"/>
    <property type="match status" value="1"/>
</dbReference>
<dbReference type="PANTHER" id="PTHR32119:SF2">
    <property type="entry name" value="OROTIDINE 5'-PHOSPHATE DECARBOXYLASE"/>
    <property type="match status" value="1"/>
</dbReference>
<dbReference type="Pfam" id="PF00215">
    <property type="entry name" value="OMPdecase"/>
    <property type="match status" value="1"/>
</dbReference>
<dbReference type="SMART" id="SM00934">
    <property type="entry name" value="OMPdecase"/>
    <property type="match status" value="1"/>
</dbReference>
<dbReference type="SUPFAM" id="SSF51366">
    <property type="entry name" value="Ribulose-phoshate binding barrel"/>
    <property type="match status" value="1"/>
</dbReference>
<dbReference type="PROSITE" id="PS00156">
    <property type="entry name" value="OMPDECASE"/>
    <property type="match status" value="1"/>
</dbReference>
<gene>
    <name evidence="1" type="primary">pyrF</name>
    <name type="ordered locus">YPA_1587</name>
</gene>
<reference key="1">
    <citation type="journal article" date="2006" name="J. Bacteriol.">
        <title>Complete genome sequence of Yersinia pestis strains Antiqua and Nepal516: evidence of gene reduction in an emerging pathogen.</title>
        <authorList>
            <person name="Chain P.S.G."/>
            <person name="Hu P."/>
            <person name="Malfatti S.A."/>
            <person name="Radnedge L."/>
            <person name="Larimer F."/>
            <person name="Vergez L.M."/>
            <person name="Worsham P."/>
            <person name="Chu M.C."/>
            <person name="Andersen G.L."/>
        </authorList>
    </citation>
    <scope>NUCLEOTIDE SEQUENCE [LARGE SCALE GENOMIC DNA]</scope>
    <source>
        <strain>Antiqua</strain>
    </source>
</reference>
<organism>
    <name type="scientific">Yersinia pestis bv. Antiqua (strain Antiqua)</name>
    <dbReference type="NCBI Taxonomy" id="360102"/>
    <lineage>
        <taxon>Bacteria</taxon>
        <taxon>Pseudomonadati</taxon>
        <taxon>Pseudomonadota</taxon>
        <taxon>Gammaproteobacteria</taxon>
        <taxon>Enterobacterales</taxon>
        <taxon>Yersiniaceae</taxon>
        <taxon>Yersinia</taxon>
    </lineage>
</organism>
<accession>Q1C7L9</accession>
<comment type="function">
    <text evidence="1">Catalyzes the decarboxylation of orotidine 5'-monophosphate (OMP) to uridine 5'-monophosphate (UMP).</text>
</comment>
<comment type="catalytic activity">
    <reaction evidence="1">
        <text>orotidine 5'-phosphate + H(+) = UMP + CO2</text>
        <dbReference type="Rhea" id="RHEA:11596"/>
        <dbReference type="ChEBI" id="CHEBI:15378"/>
        <dbReference type="ChEBI" id="CHEBI:16526"/>
        <dbReference type="ChEBI" id="CHEBI:57538"/>
        <dbReference type="ChEBI" id="CHEBI:57865"/>
        <dbReference type="EC" id="4.1.1.23"/>
    </reaction>
</comment>
<comment type="pathway">
    <text evidence="1">Pyrimidine metabolism; UMP biosynthesis via de novo pathway; UMP from orotate: step 2/2.</text>
</comment>
<comment type="subunit">
    <text evidence="1">Homodimer.</text>
</comment>
<comment type="similarity">
    <text evidence="1">Belongs to the OMP decarboxylase family. Type 1 subfamily.</text>
</comment>
<evidence type="ECO:0000255" key="1">
    <source>
        <dbReference type="HAMAP-Rule" id="MF_01200"/>
    </source>
</evidence>
<keyword id="KW-0210">Decarboxylase</keyword>
<keyword id="KW-0456">Lyase</keyword>
<keyword id="KW-0665">Pyrimidine biosynthesis</keyword>